<accession>B6ISD0</accession>
<protein>
    <recommendedName>
        <fullName evidence="1">tRNA-specific 2-thiouridylase MnmA</fullName>
        <ecNumber evidence="1">2.8.1.13</ecNumber>
    </recommendedName>
</protein>
<evidence type="ECO:0000255" key="1">
    <source>
        <dbReference type="HAMAP-Rule" id="MF_00144"/>
    </source>
</evidence>
<dbReference type="EC" id="2.8.1.13" evidence="1"/>
<dbReference type="EMBL" id="CP000613">
    <property type="protein sequence ID" value="ACI98366.1"/>
    <property type="molecule type" value="Genomic_DNA"/>
</dbReference>
<dbReference type="RefSeq" id="WP_012566156.1">
    <property type="nucleotide sequence ID" value="NC_011420.2"/>
</dbReference>
<dbReference type="SMR" id="B6ISD0"/>
<dbReference type="STRING" id="414684.RC1_0938"/>
<dbReference type="KEGG" id="rce:RC1_0938"/>
<dbReference type="eggNOG" id="COG0482">
    <property type="taxonomic scope" value="Bacteria"/>
</dbReference>
<dbReference type="HOGENOM" id="CLU_035188_0_1_5"/>
<dbReference type="OrthoDB" id="9800696at2"/>
<dbReference type="Proteomes" id="UP000001591">
    <property type="component" value="Chromosome"/>
</dbReference>
<dbReference type="GO" id="GO:0005737">
    <property type="term" value="C:cytoplasm"/>
    <property type="evidence" value="ECO:0007669"/>
    <property type="project" value="UniProtKB-SubCell"/>
</dbReference>
<dbReference type="GO" id="GO:0005524">
    <property type="term" value="F:ATP binding"/>
    <property type="evidence" value="ECO:0007669"/>
    <property type="project" value="UniProtKB-KW"/>
</dbReference>
<dbReference type="GO" id="GO:0000049">
    <property type="term" value="F:tRNA binding"/>
    <property type="evidence" value="ECO:0007669"/>
    <property type="project" value="UniProtKB-KW"/>
</dbReference>
<dbReference type="GO" id="GO:0103016">
    <property type="term" value="F:tRNA-uridine 2-sulfurtransferase activity"/>
    <property type="evidence" value="ECO:0007669"/>
    <property type="project" value="UniProtKB-EC"/>
</dbReference>
<dbReference type="GO" id="GO:0002143">
    <property type="term" value="P:tRNA wobble position uridine thiolation"/>
    <property type="evidence" value="ECO:0007669"/>
    <property type="project" value="TreeGrafter"/>
</dbReference>
<dbReference type="CDD" id="cd01998">
    <property type="entry name" value="MnmA_TRMU-like"/>
    <property type="match status" value="1"/>
</dbReference>
<dbReference type="FunFam" id="2.30.30.280:FF:000001">
    <property type="entry name" value="tRNA-specific 2-thiouridylase MnmA"/>
    <property type="match status" value="1"/>
</dbReference>
<dbReference type="FunFam" id="3.40.50.620:FF:000115">
    <property type="entry name" value="tRNA-specific 2-thiouridylase MnmA"/>
    <property type="match status" value="1"/>
</dbReference>
<dbReference type="Gene3D" id="2.30.30.280">
    <property type="entry name" value="Adenine nucleotide alpha hydrolases-like domains"/>
    <property type="match status" value="1"/>
</dbReference>
<dbReference type="Gene3D" id="3.40.50.620">
    <property type="entry name" value="HUPs"/>
    <property type="match status" value="1"/>
</dbReference>
<dbReference type="Gene3D" id="2.40.30.10">
    <property type="entry name" value="Translation factors"/>
    <property type="match status" value="1"/>
</dbReference>
<dbReference type="HAMAP" id="MF_00144">
    <property type="entry name" value="tRNA_thiouridyl_MnmA"/>
    <property type="match status" value="1"/>
</dbReference>
<dbReference type="InterPro" id="IPR004506">
    <property type="entry name" value="MnmA-like"/>
</dbReference>
<dbReference type="InterPro" id="IPR046885">
    <property type="entry name" value="MnmA-like_C"/>
</dbReference>
<dbReference type="InterPro" id="IPR046884">
    <property type="entry name" value="MnmA-like_central"/>
</dbReference>
<dbReference type="InterPro" id="IPR023382">
    <property type="entry name" value="MnmA-like_central_sf"/>
</dbReference>
<dbReference type="InterPro" id="IPR014729">
    <property type="entry name" value="Rossmann-like_a/b/a_fold"/>
</dbReference>
<dbReference type="NCBIfam" id="NF001138">
    <property type="entry name" value="PRK00143.1"/>
    <property type="match status" value="1"/>
</dbReference>
<dbReference type="NCBIfam" id="TIGR00420">
    <property type="entry name" value="trmU"/>
    <property type="match status" value="1"/>
</dbReference>
<dbReference type="PANTHER" id="PTHR11933:SF5">
    <property type="entry name" value="MITOCHONDRIAL TRNA-SPECIFIC 2-THIOURIDYLASE 1"/>
    <property type="match status" value="1"/>
</dbReference>
<dbReference type="PANTHER" id="PTHR11933">
    <property type="entry name" value="TRNA 5-METHYLAMINOMETHYL-2-THIOURIDYLATE -METHYLTRANSFERASE"/>
    <property type="match status" value="1"/>
</dbReference>
<dbReference type="Pfam" id="PF03054">
    <property type="entry name" value="tRNA_Me_trans"/>
    <property type="match status" value="1"/>
</dbReference>
<dbReference type="Pfam" id="PF20258">
    <property type="entry name" value="tRNA_Me_trans_C"/>
    <property type="match status" value="1"/>
</dbReference>
<dbReference type="Pfam" id="PF20259">
    <property type="entry name" value="tRNA_Me_trans_M"/>
    <property type="match status" value="1"/>
</dbReference>
<dbReference type="SUPFAM" id="SSF52402">
    <property type="entry name" value="Adenine nucleotide alpha hydrolases-like"/>
    <property type="match status" value="1"/>
</dbReference>
<gene>
    <name evidence="1" type="primary">mnmA</name>
    <name type="ordered locus">RC1_0938</name>
</gene>
<proteinExistence type="inferred from homology"/>
<sequence length="392" mass="41968">MNSLGFDKAPQDTRVVVAMSGGVDSSVTAALLKEQGYDVVGITLQLYDHGLTVGRKGACCAGQDIYDARQVADRIDIPHYVLDYESRFGQSVIDDFADSYLRGETPIPCVRCNQRVKFRDLLAQARDLGADCLATGHYARRVAGPTGPALHRGADPARDQSYFLFATTPAQLDYLRFPIGHLPKSETRALAERLGLAVADKPDSQDICFVPAGNYAQVVEKLRPGAVEPGEIVHLDGRVLGRHDGVIRYTVGQRRGLGIGGRRTPEGEELDPLYVVRVEPETRRVVVGPRTALARDRVLVREVNWLGGTDTADVPVTVKLRSAQPALPARVSLTADGGAVVTLTQPQYGVAPGQAAVFYQGDRVLGGGWIVRAEASPALADAPIPAGAGTAL</sequence>
<name>MNMA_RHOCS</name>
<comment type="function">
    <text evidence="1">Catalyzes the 2-thiolation of uridine at the wobble position (U34) of tRNA, leading to the formation of s(2)U34.</text>
</comment>
<comment type="catalytic activity">
    <reaction evidence="1">
        <text>S-sulfanyl-L-cysteinyl-[protein] + uridine(34) in tRNA + AH2 + ATP = 2-thiouridine(34) in tRNA + L-cysteinyl-[protein] + A + AMP + diphosphate + H(+)</text>
        <dbReference type="Rhea" id="RHEA:47032"/>
        <dbReference type="Rhea" id="RHEA-COMP:10131"/>
        <dbReference type="Rhea" id="RHEA-COMP:11726"/>
        <dbReference type="Rhea" id="RHEA-COMP:11727"/>
        <dbReference type="Rhea" id="RHEA-COMP:11728"/>
        <dbReference type="ChEBI" id="CHEBI:13193"/>
        <dbReference type="ChEBI" id="CHEBI:15378"/>
        <dbReference type="ChEBI" id="CHEBI:17499"/>
        <dbReference type="ChEBI" id="CHEBI:29950"/>
        <dbReference type="ChEBI" id="CHEBI:30616"/>
        <dbReference type="ChEBI" id="CHEBI:33019"/>
        <dbReference type="ChEBI" id="CHEBI:61963"/>
        <dbReference type="ChEBI" id="CHEBI:65315"/>
        <dbReference type="ChEBI" id="CHEBI:87170"/>
        <dbReference type="ChEBI" id="CHEBI:456215"/>
        <dbReference type="EC" id="2.8.1.13"/>
    </reaction>
</comment>
<comment type="subcellular location">
    <subcellularLocation>
        <location evidence="1">Cytoplasm</location>
    </subcellularLocation>
</comment>
<comment type="similarity">
    <text evidence="1">Belongs to the MnmA/TRMU family.</text>
</comment>
<feature type="chain" id="PRO_1000203311" description="tRNA-specific 2-thiouridylase MnmA">
    <location>
        <begin position="1"/>
        <end position="392"/>
    </location>
</feature>
<feature type="region of interest" description="Interaction with tRNA" evidence="1">
    <location>
        <begin position="158"/>
        <end position="160"/>
    </location>
</feature>
<feature type="active site" description="Nucleophile" evidence="1">
    <location>
        <position position="112"/>
    </location>
</feature>
<feature type="active site" description="Cysteine persulfide intermediate" evidence="1">
    <location>
        <position position="208"/>
    </location>
</feature>
<feature type="binding site" evidence="1">
    <location>
        <begin position="18"/>
        <end position="25"/>
    </location>
    <ligand>
        <name>ATP</name>
        <dbReference type="ChEBI" id="CHEBI:30616"/>
    </ligand>
</feature>
<feature type="binding site" evidence="1">
    <location>
        <position position="44"/>
    </location>
    <ligand>
        <name>ATP</name>
        <dbReference type="ChEBI" id="CHEBI:30616"/>
    </ligand>
</feature>
<feature type="binding site" evidence="1">
    <location>
        <position position="136"/>
    </location>
    <ligand>
        <name>ATP</name>
        <dbReference type="ChEBI" id="CHEBI:30616"/>
    </ligand>
</feature>
<feature type="site" description="Interaction with tRNA" evidence="1">
    <location>
        <position position="137"/>
    </location>
</feature>
<feature type="site" description="Interaction with tRNA" evidence="1">
    <location>
        <position position="354"/>
    </location>
</feature>
<feature type="disulfide bond" description="Alternate" evidence="1">
    <location>
        <begin position="112"/>
        <end position="208"/>
    </location>
</feature>
<keyword id="KW-0067">ATP-binding</keyword>
<keyword id="KW-0963">Cytoplasm</keyword>
<keyword id="KW-1015">Disulfide bond</keyword>
<keyword id="KW-0547">Nucleotide-binding</keyword>
<keyword id="KW-1185">Reference proteome</keyword>
<keyword id="KW-0694">RNA-binding</keyword>
<keyword id="KW-0808">Transferase</keyword>
<keyword id="KW-0819">tRNA processing</keyword>
<keyword id="KW-0820">tRNA-binding</keyword>
<reference key="1">
    <citation type="submission" date="2007-03" db="EMBL/GenBank/DDBJ databases">
        <title>Genome sequence of Rhodospirillum centenum.</title>
        <authorList>
            <person name="Touchman J.W."/>
            <person name="Bauer C."/>
            <person name="Blankenship R.E."/>
        </authorList>
    </citation>
    <scope>NUCLEOTIDE SEQUENCE [LARGE SCALE GENOMIC DNA]</scope>
    <source>
        <strain>ATCC 51521 / SW</strain>
    </source>
</reference>
<organism>
    <name type="scientific">Rhodospirillum centenum (strain ATCC 51521 / SW)</name>
    <dbReference type="NCBI Taxonomy" id="414684"/>
    <lineage>
        <taxon>Bacteria</taxon>
        <taxon>Pseudomonadati</taxon>
        <taxon>Pseudomonadota</taxon>
        <taxon>Alphaproteobacteria</taxon>
        <taxon>Rhodospirillales</taxon>
        <taxon>Rhodospirillaceae</taxon>
        <taxon>Rhodospirillum</taxon>
    </lineage>
</organism>